<comment type="function">
    <text evidence="1">Catalyzes the formation of phosphatidylethanolamine (PtdEtn) from phosphatidylserine (PtdSer).</text>
</comment>
<comment type="catalytic activity">
    <reaction evidence="1">
        <text>a 1,2-diacyl-sn-glycero-3-phospho-L-serine + H(+) = a 1,2-diacyl-sn-glycero-3-phosphoethanolamine + CO2</text>
        <dbReference type="Rhea" id="RHEA:20828"/>
        <dbReference type="ChEBI" id="CHEBI:15378"/>
        <dbReference type="ChEBI" id="CHEBI:16526"/>
        <dbReference type="ChEBI" id="CHEBI:57262"/>
        <dbReference type="ChEBI" id="CHEBI:64612"/>
        <dbReference type="EC" id="4.1.1.65"/>
    </reaction>
</comment>
<comment type="cofactor">
    <cofactor evidence="1">
        <name>pyruvate</name>
        <dbReference type="ChEBI" id="CHEBI:15361"/>
    </cofactor>
    <text evidence="1">Binds 1 pyruvoyl group covalently per subunit.</text>
</comment>
<comment type="pathway">
    <text evidence="1">Phospholipid metabolism; phosphatidylethanolamine biosynthesis; phosphatidylethanolamine from CDP-diacylglycerol: step 2/2.</text>
</comment>
<comment type="subunit">
    <text evidence="1">Heterodimer of a large membrane-associated beta subunit and a small pyruvoyl-containing alpha subunit.</text>
</comment>
<comment type="subcellular location">
    <subcellularLocation>
        <location evidence="1">Cell membrane</location>
        <topology evidence="1">Peripheral membrane protein</topology>
    </subcellularLocation>
</comment>
<comment type="PTM">
    <text evidence="1">Is synthesized initially as an inactive proenzyme. Formation of the active enzyme involves a self-maturation process in which the active site pyruvoyl group is generated from an internal serine residue via an autocatalytic post-translational modification. Two non-identical subunits are generated from the proenzyme in this reaction, and the pyruvate is formed at the N-terminus of the alpha chain, which is derived from the carboxyl end of the proenzyme. The autoendoproteolytic cleavage occurs by a canonical serine protease mechanism, in which the side chain hydroxyl group of the serine supplies its oxygen atom to form the C-terminus of the beta chain, while the remainder of the serine residue undergoes an oxidative deamination to produce ammonia and the pyruvoyl prosthetic group on the alpha chain. During this reaction, the Ser that is part of the protease active site of the proenzyme becomes the pyruvoyl prosthetic group, which constitutes an essential element of the active site of the mature decarboxylase.</text>
</comment>
<comment type="similarity">
    <text evidence="1">Belongs to the phosphatidylserine decarboxylase family. PSD-B subfamily. Prokaryotic type II sub-subfamily.</text>
</comment>
<proteinExistence type="inferred from homology"/>
<sequence length="299" mass="34224">MKKLQYIDRSTNQRVTEVVCYEKTMMFLYTSRLGKGVSTLLSRTPFLSRLYGWIQKRSWTRKKIPGFIKKNRICTKEFKKSISEFTSFNDFFTRELRPEARPIARGDDICVTPVDGAYLIYPNIAEFGEFVVKSKRFSLSKLLGDAKLVEKYASGSVVFARLALFDYHRFHFPVDCLAGPTRNINGYLFSVHPMALKDNFNIFCENKRTLTELKTEKFGDVLYLEVGALNVGSIVQTYTAEKKYSKGNEKGFFEIGGSTVIVLFEPGVIQFDADLLKNSRMGLETRCLMGQSLGRSLRE</sequence>
<dbReference type="EC" id="4.1.1.65" evidence="1"/>
<dbReference type="EMBL" id="AE015925">
    <property type="protein sequence ID" value="AAP05666.1"/>
    <property type="molecule type" value="Genomic_DNA"/>
</dbReference>
<dbReference type="RefSeq" id="WP_011006879.1">
    <property type="nucleotide sequence ID" value="NC_003361.3"/>
</dbReference>
<dbReference type="SMR" id="Q821L3"/>
<dbReference type="STRING" id="227941.CCA_00927"/>
<dbReference type="KEGG" id="cca:CCA_00927"/>
<dbReference type="eggNOG" id="COG0688">
    <property type="taxonomic scope" value="Bacteria"/>
</dbReference>
<dbReference type="HOGENOM" id="CLU_029061_2_2_0"/>
<dbReference type="OrthoDB" id="9802030at2"/>
<dbReference type="UniPathway" id="UPA00558">
    <property type="reaction ID" value="UER00616"/>
</dbReference>
<dbReference type="Proteomes" id="UP000002193">
    <property type="component" value="Chromosome"/>
</dbReference>
<dbReference type="GO" id="GO:0005886">
    <property type="term" value="C:plasma membrane"/>
    <property type="evidence" value="ECO:0007669"/>
    <property type="project" value="UniProtKB-SubCell"/>
</dbReference>
<dbReference type="GO" id="GO:0004609">
    <property type="term" value="F:phosphatidylserine decarboxylase activity"/>
    <property type="evidence" value="ECO:0007669"/>
    <property type="project" value="UniProtKB-UniRule"/>
</dbReference>
<dbReference type="GO" id="GO:0006646">
    <property type="term" value="P:phosphatidylethanolamine biosynthetic process"/>
    <property type="evidence" value="ECO:0007669"/>
    <property type="project" value="UniProtKB-UniRule"/>
</dbReference>
<dbReference type="HAMAP" id="MF_00663">
    <property type="entry name" value="PS_decarb_PSD_B_type2"/>
    <property type="match status" value="1"/>
</dbReference>
<dbReference type="InterPro" id="IPR003817">
    <property type="entry name" value="PS_Dcarbxylase"/>
</dbReference>
<dbReference type="InterPro" id="IPR033177">
    <property type="entry name" value="PSD-B"/>
</dbReference>
<dbReference type="InterPro" id="IPR033179">
    <property type="entry name" value="PSD_type2_pro"/>
</dbReference>
<dbReference type="NCBIfam" id="NF001941">
    <property type="entry name" value="PRK00723.1"/>
    <property type="match status" value="1"/>
</dbReference>
<dbReference type="NCBIfam" id="TIGR00163">
    <property type="entry name" value="PS_decarb"/>
    <property type="match status" value="1"/>
</dbReference>
<dbReference type="PANTHER" id="PTHR10067">
    <property type="entry name" value="PHOSPHATIDYLSERINE DECARBOXYLASE"/>
    <property type="match status" value="1"/>
</dbReference>
<dbReference type="PANTHER" id="PTHR10067:SF17">
    <property type="entry name" value="PHOSPHATIDYLSERINE DECARBOXYLASE PROENZYME 2"/>
    <property type="match status" value="1"/>
</dbReference>
<dbReference type="Pfam" id="PF02666">
    <property type="entry name" value="PS_Dcarbxylase"/>
    <property type="match status" value="1"/>
</dbReference>
<keyword id="KW-1003">Cell membrane</keyword>
<keyword id="KW-0210">Decarboxylase</keyword>
<keyword id="KW-0444">Lipid biosynthesis</keyword>
<keyword id="KW-0443">Lipid metabolism</keyword>
<keyword id="KW-0456">Lyase</keyword>
<keyword id="KW-0472">Membrane</keyword>
<keyword id="KW-0594">Phospholipid biosynthesis</keyword>
<keyword id="KW-1208">Phospholipid metabolism</keyword>
<keyword id="KW-0670">Pyruvate</keyword>
<keyword id="KW-0865">Zymogen</keyword>
<gene>
    <name evidence="1" type="primary">psd</name>
    <name type="ordered locus">CCA_00927</name>
</gene>
<organism>
    <name type="scientific">Chlamydia caviae (strain ATCC VR-813 / DSM 19441 / 03DC25 / GPIC)</name>
    <name type="common">Chlamydophila caviae</name>
    <dbReference type="NCBI Taxonomy" id="227941"/>
    <lineage>
        <taxon>Bacteria</taxon>
        <taxon>Pseudomonadati</taxon>
        <taxon>Chlamydiota</taxon>
        <taxon>Chlamydiia</taxon>
        <taxon>Chlamydiales</taxon>
        <taxon>Chlamydiaceae</taxon>
        <taxon>Chlamydia/Chlamydophila group</taxon>
        <taxon>Chlamydia</taxon>
    </lineage>
</organism>
<accession>Q821L3</accession>
<feature type="chain" id="PRO_0000029727" description="Phosphatidylserine decarboxylase beta chain" evidence="1">
    <location>
        <begin position="1"/>
        <end position="257"/>
    </location>
</feature>
<feature type="chain" id="PRO_0000029728" description="Phosphatidylserine decarboxylase alpha chain" evidence="1">
    <location>
        <begin position="258"/>
        <end position="299"/>
    </location>
</feature>
<feature type="active site" description="Charge relay system; for autoendoproteolytic cleavage activity" evidence="1">
    <location>
        <position position="115"/>
    </location>
</feature>
<feature type="active site" description="Charge relay system; for autoendoproteolytic cleavage activity" evidence="1">
    <location>
        <position position="171"/>
    </location>
</feature>
<feature type="active site" description="Charge relay system; for autoendoproteolytic cleavage activity" evidence="1">
    <location>
        <position position="258"/>
    </location>
</feature>
<feature type="active site" description="Schiff-base intermediate with substrate; via pyruvic acid; for decarboxylase activity" evidence="1">
    <location>
        <position position="258"/>
    </location>
</feature>
<feature type="site" description="Cleavage (non-hydrolytic); by autocatalysis" evidence="1">
    <location>
        <begin position="257"/>
        <end position="258"/>
    </location>
</feature>
<feature type="modified residue" description="Pyruvic acid (Ser); by autocatalysis" evidence="1">
    <location>
        <position position="258"/>
    </location>
</feature>
<evidence type="ECO:0000255" key="1">
    <source>
        <dbReference type="HAMAP-Rule" id="MF_00663"/>
    </source>
</evidence>
<reference key="1">
    <citation type="journal article" date="2003" name="Nucleic Acids Res.">
        <title>Genome sequence of Chlamydophila caviae (Chlamydia psittaci GPIC): examining the role of niche-specific genes in the evolution of the Chlamydiaceae.</title>
        <authorList>
            <person name="Read T.D."/>
            <person name="Myers G.S.A."/>
            <person name="Brunham R.C."/>
            <person name="Nelson W.C."/>
            <person name="Paulsen I.T."/>
            <person name="Heidelberg J.F."/>
            <person name="Holtzapple E.K."/>
            <person name="Khouri H.M."/>
            <person name="Federova N.B."/>
            <person name="Carty H.A."/>
            <person name="Umayam L.A."/>
            <person name="Haft D.H."/>
            <person name="Peterson J.D."/>
            <person name="Beanan M.J."/>
            <person name="White O."/>
            <person name="Salzberg S.L."/>
            <person name="Hsia R.-C."/>
            <person name="McClarty G."/>
            <person name="Rank R.G."/>
            <person name="Bavoil P.M."/>
            <person name="Fraser C.M."/>
        </authorList>
    </citation>
    <scope>NUCLEOTIDE SEQUENCE [LARGE SCALE GENOMIC DNA]</scope>
    <source>
        <strain>ATCC VR-813 / DSM 19441 / 03DC25 / GPIC</strain>
    </source>
</reference>
<name>PSD_CHLCV</name>
<protein>
    <recommendedName>
        <fullName evidence="1">Phosphatidylserine decarboxylase proenzyme</fullName>
        <ecNumber evidence="1">4.1.1.65</ecNumber>
    </recommendedName>
    <component>
        <recommendedName>
            <fullName evidence="1">Phosphatidylserine decarboxylase alpha chain</fullName>
        </recommendedName>
    </component>
    <component>
        <recommendedName>
            <fullName evidence="1">Phosphatidylserine decarboxylase beta chain</fullName>
        </recommendedName>
    </component>
</protein>